<gene>
    <name evidence="1" type="primary">ureAB</name>
    <name type="ordered locus">PSPTO_2411</name>
</gene>
<comment type="catalytic activity">
    <reaction evidence="1">
        <text>urea + 2 H2O + H(+) = hydrogencarbonate + 2 NH4(+)</text>
        <dbReference type="Rhea" id="RHEA:20557"/>
        <dbReference type="ChEBI" id="CHEBI:15377"/>
        <dbReference type="ChEBI" id="CHEBI:15378"/>
        <dbReference type="ChEBI" id="CHEBI:16199"/>
        <dbReference type="ChEBI" id="CHEBI:17544"/>
        <dbReference type="ChEBI" id="CHEBI:28938"/>
        <dbReference type="EC" id="3.5.1.5"/>
    </reaction>
</comment>
<comment type="pathway">
    <text evidence="1">Nitrogen metabolism; urea degradation; CO(2) and NH(3) from urea (urease route): step 1/1.</text>
</comment>
<comment type="subunit">
    <text evidence="1">Heterohexamer of 3 UreC (alpha) and 3 UreAB (gamma/beta) subunits.</text>
</comment>
<comment type="subcellular location">
    <subcellularLocation>
        <location evidence="1">Cytoplasm</location>
    </subcellularLocation>
</comment>
<comment type="similarity">
    <text evidence="1">In the N-terminal section; belongs to the urease gamma subunit family.</text>
</comment>
<comment type="similarity">
    <text evidence="1">In the C-terminal section; belongs to the urease beta subunit family.</text>
</comment>
<evidence type="ECO:0000255" key="1">
    <source>
        <dbReference type="HAMAP-Rule" id="MF_01955"/>
    </source>
</evidence>
<protein>
    <recommendedName>
        <fullName evidence="1">Urease subunit gamma/beta</fullName>
        <ecNumber evidence="1">3.5.1.5</ecNumber>
    </recommendedName>
    <alternativeName>
        <fullName evidence="1">Urea amidohydrolase subunit gamma/beta</fullName>
    </alternativeName>
</protein>
<reference key="1">
    <citation type="journal article" date="2003" name="Proc. Natl. Acad. Sci. U.S.A.">
        <title>The complete genome sequence of the Arabidopsis and tomato pathogen Pseudomonas syringae pv. tomato DC3000.</title>
        <authorList>
            <person name="Buell C.R."/>
            <person name="Joardar V."/>
            <person name="Lindeberg M."/>
            <person name="Selengut J."/>
            <person name="Paulsen I.T."/>
            <person name="Gwinn M.L."/>
            <person name="Dodson R.J."/>
            <person name="DeBoy R.T."/>
            <person name="Durkin A.S."/>
            <person name="Kolonay J.F."/>
            <person name="Madupu R."/>
            <person name="Daugherty S.C."/>
            <person name="Brinkac L.M."/>
            <person name="Beanan M.J."/>
            <person name="Haft D.H."/>
            <person name="Nelson W.C."/>
            <person name="Davidsen T.M."/>
            <person name="Zafar N."/>
            <person name="Zhou L."/>
            <person name="Liu J."/>
            <person name="Yuan Q."/>
            <person name="Khouri H.M."/>
            <person name="Fedorova N.B."/>
            <person name="Tran B."/>
            <person name="Russell D."/>
            <person name="Berry K.J."/>
            <person name="Utterback T.R."/>
            <person name="Van Aken S.E."/>
            <person name="Feldblyum T.V."/>
            <person name="D'Ascenzo M."/>
            <person name="Deng W.-L."/>
            <person name="Ramos A.R."/>
            <person name="Alfano J.R."/>
            <person name="Cartinhour S."/>
            <person name="Chatterjee A.K."/>
            <person name="Delaney T.P."/>
            <person name="Lazarowitz S.G."/>
            <person name="Martin G.B."/>
            <person name="Schneider D.J."/>
            <person name="Tang X."/>
            <person name="Bender C.L."/>
            <person name="White O."/>
            <person name="Fraser C.M."/>
            <person name="Collmer A."/>
        </authorList>
    </citation>
    <scope>NUCLEOTIDE SEQUENCE [LARGE SCALE GENOMIC DNA]</scope>
    <source>
        <strain>ATCC BAA-871 / DC3000</strain>
    </source>
</reference>
<sequence>MLLTPTELERLTLYTAAELSRKRRGKGLRLNFPEASALIADEILEGAREGRSVAELIGFGSTILNTDDVMPGVADLLPVLQVEGTFPDGTKLVTVHQPIRPGKLPLAVMPTPGEILSPNSDIQLNNGRPIATLRAINTGDRPVQIGSHYHFFEVNKALDFPRETAFGMHLDIPAGTAVRFEPGELREVQLVQFGGTGDIHGFSGLTNGNLHDPACKRAALERARAQHFKGA</sequence>
<feature type="chain" id="PRO_0000098077" description="Urease subunit gamma/beta">
    <location>
        <begin position="1"/>
        <end position="231"/>
    </location>
</feature>
<feature type="region of interest" description="Urease gamma">
    <location>
        <begin position="1"/>
        <end position="101"/>
    </location>
</feature>
<feature type="region of interest" description="Urease beta">
    <location>
        <begin position="102"/>
        <end position="231"/>
    </location>
</feature>
<dbReference type="EC" id="3.5.1.5" evidence="1"/>
<dbReference type="EMBL" id="AE016853">
    <property type="protein sequence ID" value="AAO55920.1"/>
    <property type="molecule type" value="Genomic_DNA"/>
</dbReference>
<dbReference type="RefSeq" id="NP_792225.1">
    <property type="nucleotide sequence ID" value="NC_004578.1"/>
</dbReference>
<dbReference type="RefSeq" id="WP_007246901.1">
    <property type="nucleotide sequence ID" value="NC_004578.1"/>
</dbReference>
<dbReference type="SMR" id="Q883F3"/>
<dbReference type="STRING" id="223283.PSPTO_2411"/>
<dbReference type="GeneID" id="1184063"/>
<dbReference type="KEGG" id="pst:PSPTO_2411"/>
<dbReference type="PATRIC" id="fig|223283.9.peg.2448"/>
<dbReference type="eggNOG" id="COG0831">
    <property type="taxonomic scope" value="Bacteria"/>
</dbReference>
<dbReference type="eggNOG" id="COG0832">
    <property type="taxonomic scope" value="Bacteria"/>
</dbReference>
<dbReference type="HOGENOM" id="CLU_000980_3_0_6"/>
<dbReference type="OrthoDB" id="9797217at2"/>
<dbReference type="PhylomeDB" id="Q883F3"/>
<dbReference type="UniPathway" id="UPA00258">
    <property type="reaction ID" value="UER00370"/>
</dbReference>
<dbReference type="Proteomes" id="UP000002515">
    <property type="component" value="Chromosome"/>
</dbReference>
<dbReference type="GO" id="GO:0035550">
    <property type="term" value="C:urease complex"/>
    <property type="evidence" value="ECO:0007669"/>
    <property type="project" value="InterPro"/>
</dbReference>
<dbReference type="GO" id="GO:0016151">
    <property type="term" value="F:nickel cation binding"/>
    <property type="evidence" value="ECO:0007669"/>
    <property type="project" value="InterPro"/>
</dbReference>
<dbReference type="GO" id="GO:0009039">
    <property type="term" value="F:urease activity"/>
    <property type="evidence" value="ECO:0007669"/>
    <property type="project" value="UniProtKB-UniRule"/>
</dbReference>
<dbReference type="GO" id="GO:0043419">
    <property type="term" value="P:urea catabolic process"/>
    <property type="evidence" value="ECO:0007669"/>
    <property type="project" value="UniProtKB-UniRule"/>
</dbReference>
<dbReference type="CDD" id="cd00407">
    <property type="entry name" value="Urease_beta"/>
    <property type="match status" value="1"/>
</dbReference>
<dbReference type="CDD" id="cd00390">
    <property type="entry name" value="Urease_gamma"/>
    <property type="match status" value="1"/>
</dbReference>
<dbReference type="FunFam" id="2.10.150.10:FF:000001">
    <property type="entry name" value="Urease subunit beta"/>
    <property type="match status" value="1"/>
</dbReference>
<dbReference type="Gene3D" id="2.10.150.10">
    <property type="entry name" value="Urease, beta subunit"/>
    <property type="match status" value="1"/>
</dbReference>
<dbReference type="Gene3D" id="3.30.280.10">
    <property type="entry name" value="Urease, gamma-like subunit"/>
    <property type="match status" value="1"/>
</dbReference>
<dbReference type="HAMAP" id="MF_01954">
    <property type="entry name" value="Urease_beta"/>
    <property type="match status" value="1"/>
</dbReference>
<dbReference type="HAMAP" id="MF_01955">
    <property type="entry name" value="Urease_beta_gamma"/>
    <property type="match status" value="1"/>
</dbReference>
<dbReference type="InterPro" id="IPR002019">
    <property type="entry name" value="Urease_beta-like"/>
</dbReference>
<dbReference type="InterPro" id="IPR036461">
    <property type="entry name" value="Urease_betasu_sf"/>
</dbReference>
<dbReference type="InterPro" id="IPR008223">
    <property type="entry name" value="Urease_gamma-beta_su"/>
</dbReference>
<dbReference type="InterPro" id="IPR002026">
    <property type="entry name" value="Urease_gamma/gamma-beta_su"/>
</dbReference>
<dbReference type="InterPro" id="IPR036463">
    <property type="entry name" value="Urease_gamma_sf"/>
</dbReference>
<dbReference type="InterPro" id="IPR050069">
    <property type="entry name" value="Urease_subunit"/>
</dbReference>
<dbReference type="NCBIfam" id="NF009671">
    <property type="entry name" value="PRK13192.1"/>
    <property type="match status" value="1"/>
</dbReference>
<dbReference type="NCBIfam" id="NF009682">
    <property type="entry name" value="PRK13203.1"/>
    <property type="match status" value="1"/>
</dbReference>
<dbReference type="NCBIfam" id="NF009712">
    <property type="entry name" value="PRK13241.1"/>
    <property type="match status" value="1"/>
</dbReference>
<dbReference type="NCBIfam" id="TIGR00192">
    <property type="entry name" value="urease_beta"/>
    <property type="match status" value="1"/>
</dbReference>
<dbReference type="NCBIfam" id="TIGR00193">
    <property type="entry name" value="urease_gam"/>
    <property type="match status" value="1"/>
</dbReference>
<dbReference type="PANTHER" id="PTHR33569">
    <property type="entry name" value="UREASE"/>
    <property type="match status" value="1"/>
</dbReference>
<dbReference type="PANTHER" id="PTHR33569:SF1">
    <property type="entry name" value="UREASE"/>
    <property type="match status" value="1"/>
</dbReference>
<dbReference type="Pfam" id="PF00699">
    <property type="entry name" value="Urease_beta"/>
    <property type="match status" value="1"/>
</dbReference>
<dbReference type="Pfam" id="PF00547">
    <property type="entry name" value="Urease_gamma"/>
    <property type="match status" value="1"/>
</dbReference>
<dbReference type="PIRSF" id="PIRSF001225">
    <property type="entry name" value="Urease_gammabeta"/>
    <property type="match status" value="1"/>
</dbReference>
<dbReference type="SUPFAM" id="SSF51278">
    <property type="entry name" value="Urease, beta-subunit"/>
    <property type="match status" value="1"/>
</dbReference>
<dbReference type="SUPFAM" id="SSF54111">
    <property type="entry name" value="Urease, gamma-subunit"/>
    <property type="match status" value="1"/>
</dbReference>
<accession>Q883F3</accession>
<keyword id="KW-0963">Cytoplasm</keyword>
<keyword id="KW-0378">Hydrolase</keyword>
<keyword id="KW-1185">Reference proteome</keyword>
<organism>
    <name type="scientific">Pseudomonas syringae pv. tomato (strain ATCC BAA-871 / DC3000)</name>
    <dbReference type="NCBI Taxonomy" id="223283"/>
    <lineage>
        <taxon>Bacteria</taxon>
        <taxon>Pseudomonadati</taxon>
        <taxon>Pseudomonadota</taxon>
        <taxon>Gammaproteobacteria</taxon>
        <taxon>Pseudomonadales</taxon>
        <taxon>Pseudomonadaceae</taxon>
        <taxon>Pseudomonas</taxon>
    </lineage>
</organism>
<proteinExistence type="inferred from homology"/>
<name>URE23_PSESM</name>